<proteinExistence type="inferred from homology"/>
<sequence length="443" mass="47361">MTRKYFGTDGIRGTVGQAPITPDFVLRLAHAVGRVLKKSEARPTVLIGKDTRISGYMLESALESGFNSAGVDVVLLGPLPTPGVAYLTRAQRASLGVVISASHNPFADNGIKFFSAQGSKLPDVWEHDVEAALDEPPVWADSASLGKTRRLDDAAGRYIEFCKSTFANDLTLKGLKIVVDAAHGAAYQVAPKVFHELGAEVVAIGCSPDGLNINHEVGATHPQALIEAVKAHQADFGVALDGDADRLQLVDHAGRLYNGDELLYLLVDERLGRDEPVPGVVGTLMTNMAVEVALRARGVQFVRAKVGDRYVLEELEKHKWLLGGEGSGHLLALDKHTTGDGLISALQVLQACVRSGKKLAELLAEVTLFPQTLINVRLQPGQDWQVSANLASESRAVETELGAAGRLLIRASGTEPLVRVMVEARDAVQARACAERIANTLSV</sequence>
<comment type="function">
    <text evidence="1">Catalyzes the conversion of glucosamine-6-phosphate to glucosamine-1-phosphate.</text>
</comment>
<comment type="catalytic activity">
    <reaction evidence="1">
        <text>alpha-D-glucosamine 1-phosphate = D-glucosamine 6-phosphate</text>
        <dbReference type="Rhea" id="RHEA:23424"/>
        <dbReference type="ChEBI" id="CHEBI:58516"/>
        <dbReference type="ChEBI" id="CHEBI:58725"/>
        <dbReference type="EC" id="5.4.2.10"/>
    </reaction>
</comment>
<comment type="cofactor">
    <cofactor evidence="1">
        <name>Mg(2+)</name>
        <dbReference type="ChEBI" id="CHEBI:18420"/>
    </cofactor>
    <text evidence="1">Binds 1 Mg(2+) ion per subunit.</text>
</comment>
<comment type="PTM">
    <text evidence="1">Activated by phosphorylation.</text>
</comment>
<comment type="similarity">
    <text evidence="1">Belongs to the phosphohexose mutase family.</text>
</comment>
<name>GLMM_ALBFT</name>
<protein>
    <recommendedName>
        <fullName evidence="1">Phosphoglucosamine mutase</fullName>
        <ecNumber evidence="1">5.4.2.10</ecNumber>
    </recommendedName>
</protein>
<feature type="chain" id="PRO_0000301367" description="Phosphoglucosamine mutase">
    <location>
        <begin position="1"/>
        <end position="443"/>
    </location>
</feature>
<feature type="active site" description="Phosphoserine intermediate" evidence="1">
    <location>
        <position position="102"/>
    </location>
</feature>
<feature type="binding site" description="via phosphate group" evidence="1">
    <location>
        <position position="102"/>
    </location>
    <ligand>
        <name>Mg(2+)</name>
        <dbReference type="ChEBI" id="CHEBI:18420"/>
    </ligand>
</feature>
<feature type="binding site" evidence="1">
    <location>
        <position position="241"/>
    </location>
    <ligand>
        <name>Mg(2+)</name>
        <dbReference type="ChEBI" id="CHEBI:18420"/>
    </ligand>
</feature>
<feature type="binding site" evidence="1">
    <location>
        <position position="243"/>
    </location>
    <ligand>
        <name>Mg(2+)</name>
        <dbReference type="ChEBI" id="CHEBI:18420"/>
    </ligand>
</feature>
<feature type="binding site" evidence="1">
    <location>
        <position position="245"/>
    </location>
    <ligand>
        <name>Mg(2+)</name>
        <dbReference type="ChEBI" id="CHEBI:18420"/>
    </ligand>
</feature>
<feature type="modified residue" description="Phosphoserine" evidence="1">
    <location>
        <position position="102"/>
    </location>
</feature>
<keyword id="KW-0413">Isomerase</keyword>
<keyword id="KW-0460">Magnesium</keyword>
<keyword id="KW-0479">Metal-binding</keyword>
<keyword id="KW-0597">Phosphoprotein</keyword>
<keyword id="KW-1185">Reference proteome</keyword>
<accession>Q21WW5</accession>
<evidence type="ECO:0000255" key="1">
    <source>
        <dbReference type="HAMAP-Rule" id="MF_01554"/>
    </source>
</evidence>
<dbReference type="EC" id="5.4.2.10" evidence="1"/>
<dbReference type="EMBL" id="CP000267">
    <property type="protein sequence ID" value="ABD69738.1"/>
    <property type="molecule type" value="Genomic_DNA"/>
</dbReference>
<dbReference type="RefSeq" id="WP_011464306.1">
    <property type="nucleotide sequence ID" value="NC_007908.1"/>
</dbReference>
<dbReference type="SMR" id="Q21WW5"/>
<dbReference type="STRING" id="338969.Rfer_2013"/>
<dbReference type="KEGG" id="rfr:Rfer_2013"/>
<dbReference type="eggNOG" id="COG1109">
    <property type="taxonomic scope" value="Bacteria"/>
</dbReference>
<dbReference type="HOGENOM" id="CLU_016950_7_0_4"/>
<dbReference type="OrthoDB" id="9803322at2"/>
<dbReference type="Proteomes" id="UP000008332">
    <property type="component" value="Chromosome"/>
</dbReference>
<dbReference type="GO" id="GO:0005829">
    <property type="term" value="C:cytosol"/>
    <property type="evidence" value="ECO:0007669"/>
    <property type="project" value="TreeGrafter"/>
</dbReference>
<dbReference type="GO" id="GO:0000287">
    <property type="term" value="F:magnesium ion binding"/>
    <property type="evidence" value="ECO:0007669"/>
    <property type="project" value="UniProtKB-UniRule"/>
</dbReference>
<dbReference type="GO" id="GO:0008966">
    <property type="term" value="F:phosphoglucosamine mutase activity"/>
    <property type="evidence" value="ECO:0007669"/>
    <property type="project" value="UniProtKB-UniRule"/>
</dbReference>
<dbReference type="GO" id="GO:0004615">
    <property type="term" value="F:phosphomannomutase activity"/>
    <property type="evidence" value="ECO:0007669"/>
    <property type="project" value="TreeGrafter"/>
</dbReference>
<dbReference type="GO" id="GO:0005975">
    <property type="term" value="P:carbohydrate metabolic process"/>
    <property type="evidence" value="ECO:0007669"/>
    <property type="project" value="InterPro"/>
</dbReference>
<dbReference type="GO" id="GO:0009252">
    <property type="term" value="P:peptidoglycan biosynthetic process"/>
    <property type="evidence" value="ECO:0007669"/>
    <property type="project" value="TreeGrafter"/>
</dbReference>
<dbReference type="GO" id="GO:0006048">
    <property type="term" value="P:UDP-N-acetylglucosamine biosynthetic process"/>
    <property type="evidence" value="ECO:0007669"/>
    <property type="project" value="TreeGrafter"/>
</dbReference>
<dbReference type="CDD" id="cd05802">
    <property type="entry name" value="GlmM"/>
    <property type="match status" value="1"/>
</dbReference>
<dbReference type="FunFam" id="3.30.310.50:FF:000001">
    <property type="entry name" value="Phosphoglucosamine mutase"/>
    <property type="match status" value="1"/>
</dbReference>
<dbReference type="FunFam" id="3.40.120.10:FF:000001">
    <property type="entry name" value="Phosphoglucosamine mutase"/>
    <property type="match status" value="1"/>
</dbReference>
<dbReference type="FunFam" id="3.40.120.10:FF:000003">
    <property type="entry name" value="Phosphoglucosamine mutase"/>
    <property type="match status" value="1"/>
</dbReference>
<dbReference type="Gene3D" id="3.40.120.10">
    <property type="entry name" value="Alpha-D-Glucose-1,6-Bisphosphate, subunit A, domain 3"/>
    <property type="match status" value="3"/>
</dbReference>
<dbReference type="Gene3D" id="3.30.310.50">
    <property type="entry name" value="Alpha-D-phosphohexomutase, C-terminal domain"/>
    <property type="match status" value="1"/>
</dbReference>
<dbReference type="HAMAP" id="MF_01554_B">
    <property type="entry name" value="GlmM_B"/>
    <property type="match status" value="1"/>
</dbReference>
<dbReference type="InterPro" id="IPR005844">
    <property type="entry name" value="A-D-PHexomutase_a/b/a-I"/>
</dbReference>
<dbReference type="InterPro" id="IPR016055">
    <property type="entry name" value="A-D-PHexomutase_a/b/a-I/II/III"/>
</dbReference>
<dbReference type="InterPro" id="IPR005845">
    <property type="entry name" value="A-D-PHexomutase_a/b/a-II"/>
</dbReference>
<dbReference type="InterPro" id="IPR005846">
    <property type="entry name" value="A-D-PHexomutase_a/b/a-III"/>
</dbReference>
<dbReference type="InterPro" id="IPR005843">
    <property type="entry name" value="A-D-PHexomutase_C"/>
</dbReference>
<dbReference type="InterPro" id="IPR036900">
    <property type="entry name" value="A-D-PHexomutase_C_sf"/>
</dbReference>
<dbReference type="InterPro" id="IPR016066">
    <property type="entry name" value="A-D-PHexomutase_CS"/>
</dbReference>
<dbReference type="InterPro" id="IPR005841">
    <property type="entry name" value="Alpha-D-phosphohexomutase_SF"/>
</dbReference>
<dbReference type="InterPro" id="IPR006352">
    <property type="entry name" value="GlmM_bact"/>
</dbReference>
<dbReference type="InterPro" id="IPR050060">
    <property type="entry name" value="Phosphoglucosamine_mutase"/>
</dbReference>
<dbReference type="NCBIfam" id="TIGR01455">
    <property type="entry name" value="glmM"/>
    <property type="match status" value="1"/>
</dbReference>
<dbReference type="NCBIfam" id="NF008139">
    <property type="entry name" value="PRK10887.1"/>
    <property type="match status" value="1"/>
</dbReference>
<dbReference type="PANTHER" id="PTHR42946:SF1">
    <property type="entry name" value="PHOSPHOGLUCOMUTASE (ALPHA-D-GLUCOSE-1,6-BISPHOSPHATE-DEPENDENT)"/>
    <property type="match status" value="1"/>
</dbReference>
<dbReference type="PANTHER" id="PTHR42946">
    <property type="entry name" value="PHOSPHOHEXOSE MUTASE"/>
    <property type="match status" value="1"/>
</dbReference>
<dbReference type="Pfam" id="PF02878">
    <property type="entry name" value="PGM_PMM_I"/>
    <property type="match status" value="1"/>
</dbReference>
<dbReference type="Pfam" id="PF02879">
    <property type="entry name" value="PGM_PMM_II"/>
    <property type="match status" value="1"/>
</dbReference>
<dbReference type="Pfam" id="PF02880">
    <property type="entry name" value="PGM_PMM_III"/>
    <property type="match status" value="1"/>
</dbReference>
<dbReference type="Pfam" id="PF00408">
    <property type="entry name" value="PGM_PMM_IV"/>
    <property type="match status" value="1"/>
</dbReference>
<dbReference type="PRINTS" id="PR00509">
    <property type="entry name" value="PGMPMM"/>
</dbReference>
<dbReference type="SUPFAM" id="SSF55957">
    <property type="entry name" value="Phosphoglucomutase, C-terminal domain"/>
    <property type="match status" value="1"/>
</dbReference>
<dbReference type="SUPFAM" id="SSF53738">
    <property type="entry name" value="Phosphoglucomutase, first 3 domains"/>
    <property type="match status" value="3"/>
</dbReference>
<dbReference type="PROSITE" id="PS00710">
    <property type="entry name" value="PGM_PMM"/>
    <property type="match status" value="1"/>
</dbReference>
<reference key="1">
    <citation type="submission" date="2006-02" db="EMBL/GenBank/DDBJ databases">
        <title>Complete sequence of chromosome of Rhodoferax ferrireducens DSM 15236.</title>
        <authorList>
            <person name="Copeland A."/>
            <person name="Lucas S."/>
            <person name="Lapidus A."/>
            <person name="Barry K."/>
            <person name="Detter J.C."/>
            <person name="Glavina del Rio T."/>
            <person name="Hammon N."/>
            <person name="Israni S."/>
            <person name="Pitluck S."/>
            <person name="Brettin T."/>
            <person name="Bruce D."/>
            <person name="Han C."/>
            <person name="Tapia R."/>
            <person name="Gilna P."/>
            <person name="Kiss H."/>
            <person name="Schmutz J."/>
            <person name="Larimer F."/>
            <person name="Land M."/>
            <person name="Kyrpides N."/>
            <person name="Ivanova N."/>
            <person name="Richardson P."/>
        </authorList>
    </citation>
    <scope>NUCLEOTIDE SEQUENCE [LARGE SCALE GENOMIC DNA]</scope>
    <source>
        <strain>ATCC BAA-621 / DSM 15236 / T118</strain>
    </source>
</reference>
<organism>
    <name type="scientific">Albidiferax ferrireducens (strain ATCC BAA-621 / DSM 15236 / T118)</name>
    <name type="common">Rhodoferax ferrireducens</name>
    <dbReference type="NCBI Taxonomy" id="338969"/>
    <lineage>
        <taxon>Bacteria</taxon>
        <taxon>Pseudomonadati</taxon>
        <taxon>Pseudomonadota</taxon>
        <taxon>Betaproteobacteria</taxon>
        <taxon>Burkholderiales</taxon>
        <taxon>Comamonadaceae</taxon>
        <taxon>Rhodoferax</taxon>
    </lineage>
</organism>
<gene>
    <name evidence="1" type="primary">glmM</name>
    <name type="ordered locus">Rfer_2013</name>
</gene>